<accession>Q5BIN6</accession>
<accession>Q0P5M1</accession>
<protein>
    <recommendedName>
        <fullName>Protein cornichon homolog 1</fullName>
        <shortName>CNIH-1</shortName>
    </recommendedName>
    <alternativeName>
        <fullName>Cornichon family AMPA receptor auxiliary protein 1</fullName>
    </alternativeName>
    <alternativeName>
        <fullName>Protein cornichon homolog</fullName>
    </alternativeName>
</protein>
<keyword id="KW-0256">Endoplasmic reticulum</keyword>
<keyword id="KW-0931">ER-Golgi transport</keyword>
<keyword id="KW-0333">Golgi apparatus</keyword>
<keyword id="KW-0472">Membrane</keyword>
<keyword id="KW-1185">Reference proteome</keyword>
<keyword id="KW-0812">Transmembrane</keyword>
<keyword id="KW-1133">Transmembrane helix</keyword>
<keyword id="KW-0813">Transport</keyword>
<gene>
    <name type="primary">CNIH1</name>
    <name type="synonym">CNIH</name>
</gene>
<dbReference type="EMBL" id="BT021188">
    <property type="protein sequence ID" value="AAX31370.1"/>
    <property type="molecule type" value="mRNA"/>
</dbReference>
<dbReference type="EMBL" id="BC119865">
    <property type="protein sequence ID" value="AAI19866.1"/>
    <property type="molecule type" value="mRNA"/>
</dbReference>
<dbReference type="RefSeq" id="NP_001029911.1">
    <property type="nucleotide sequence ID" value="NM_001034739.2"/>
</dbReference>
<dbReference type="SMR" id="Q5BIN6"/>
<dbReference type="FunCoup" id="Q5BIN6">
    <property type="interactions" value="1959"/>
</dbReference>
<dbReference type="STRING" id="9913.ENSBTAP00000041260"/>
<dbReference type="GeneID" id="613575"/>
<dbReference type="KEGG" id="bta:613575"/>
<dbReference type="CTD" id="10175"/>
<dbReference type="VEuPathDB" id="HostDB:ENSBTAG00000019500"/>
<dbReference type="HOGENOM" id="CLU_112942_1_0_1"/>
<dbReference type="InParanoid" id="Q5BIN6"/>
<dbReference type="OMA" id="FAVFHVI"/>
<dbReference type="OrthoDB" id="434393at2759"/>
<dbReference type="Reactome" id="R-BTA-204005">
    <property type="pathway name" value="COPII-mediated vesicle transport"/>
</dbReference>
<dbReference type="Reactome" id="R-BTA-5694530">
    <property type="pathway name" value="Cargo concentration in the ER"/>
</dbReference>
<dbReference type="Proteomes" id="UP000009136">
    <property type="component" value="Chromosome 10"/>
</dbReference>
<dbReference type="Bgee" id="ENSBTAG00000019500">
    <property type="expression patterns" value="Expressed in spermatocyte and 108 other cell types or tissues"/>
</dbReference>
<dbReference type="GO" id="GO:0005789">
    <property type="term" value="C:endoplasmic reticulum membrane"/>
    <property type="evidence" value="ECO:0007669"/>
    <property type="project" value="UniProtKB-SubCell"/>
</dbReference>
<dbReference type="GO" id="GO:0000139">
    <property type="term" value="C:Golgi membrane"/>
    <property type="evidence" value="ECO:0007669"/>
    <property type="project" value="UniProtKB-SubCell"/>
</dbReference>
<dbReference type="GO" id="GO:0005102">
    <property type="term" value="F:signaling receptor binding"/>
    <property type="evidence" value="ECO:0000318"/>
    <property type="project" value="GO_Central"/>
</dbReference>
<dbReference type="GO" id="GO:0016192">
    <property type="term" value="P:vesicle-mediated transport"/>
    <property type="evidence" value="ECO:0007669"/>
    <property type="project" value="UniProtKB-KW"/>
</dbReference>
<dbReference type="InterPro" id="IPR003377">
    <property type="entry name" value="Cornichon"/>
</dbReference>
<dbReference type="InterPro" id="IPR033466">
    <property type="entry name" value="Cornichon_conserved"/>
</dbReference>
<dbReference type="PANTHER" id="PTHR12290">
    <property type="entry name" value="CORNICHON-RELATED"/>
    <property type="match status" value="1"/>
</dbReference>
<dbReference type="Pfam" id="PF03311">
    <property type="entry name" value="Cornichon"/>
    <property type="match status" value="1"/>
</dbReference>
<dbReference type="SMART" id="SM01398">
    <property type="entry name" value="Cornichon"/>
    <property type="match status" value="1"/>
</dbReference>
<dbReference type="PROSITE" id="PS01340">
    <property type="entry name" value="CORNICHON"/>
    <property type="match status" value="1"/>
</dbReference>
<reference key="1">
    <citation type="journal article" date="2005" name="BMC Genomics">
        <title>Characterization of 954 bovine full-CDS cDNA sequences.</title>
        <authorList>
            <person name="Harhay G.P."/>
            <person name="Sonstegard T.S."/>
            <person name="Keele J.W."/>
            <person name="Heaton M.P."/>
            <person name="Clawson M.L."/>
            <person name="Snelling W.M."/>
            <person name="Wiedmann R.T."/>
            <person name="Van Tassell C.P."/>
            <person name="Smith T.P.L."/>
        </authorList>
    </citation>
    <scope>NUCLEOTIDE SEQUENCE [LARGE SCALE MRNA]</scope>
</reference>
<reference key="2">
    <citation type="submission" date="2006-08" db="EMBL/GenBank/DDBJ databases">
        <authorList>
            <consortium name="NIH - Mammalian Gene Collection (MGC) project"/>
        </authorList>
    </citation>
    <scope>NUCLEOTIDE SEQUENCE [LARGE SCALE MRNA]</scope>
    <source>
        <strain>Hereford</strain>
        <tissue>Hippocampus</tissue>
    </source>
</reference>
<evidence type="ECO:0000250" key="1"/>
<evidence type="ECO:0000255" key="2"/>
<evidence type="ECO:0000305" key="3"/>
<proteinExistence type="evidence at transcript level"/>
<name>CNIH1_BOVIN</name>
<sequence>MAFTFAAFCYMLALLLTAALIFFAIWHIIAFDELKTDYKNPIDQCNTLNPLVLPEYLIHAFFCVMFLCAAEWLTLGLNMPLLAYHIWRYMSRPVMSGPGLYDPTTIMNADILAYCQKEGWCKLAFYLLAFFYYLYGMIYVLVSS</sequence>
<organism>
    <name type="scientific">Bos taurus</name>
    <name type="common">Bovine</name>
    <dbReference type="NCBI Taxonomy" id="9913"/>
    <lineage>
        <taxon>Eukaryota</taxon>
        <taxon>Metazoa</taxon>
        <taxon>Chordata</taxon>
        <taxon>Craniata</taxon>
        <taxon>Vertebrata</taxon>
        <taxon>Euteleostomi</taxon>
        <taxon>Mammalia</taxon>
        <taxon>Eutheria</taxon>
        <taxon>Laurasiatheria</taxon>
        <taxon>Artiodactyla</taxon>
        <taxon>Ruminantia</taxon>
        <taxon>Pecora</taxon>
        <taxon>Bovidae</taxon>
        <taxon>Bovinae</taxon>
        <taxon>Bos</taxon>
    </lineage>
</organism>
<comment type="function">
    <text evidence="1">Involved in the selective transport and maturation of TGF-alpha family proteins.</text>
</comment>
<comment type="subunit">
    <text evidence="1">Interacts with AREG immature precursor and with immature TGFA, i.e. with a prosegment and lacking full N-glycosylation, but not with the fully N-glycosylated form. In the Golgi apparatus, may form a complex with GORASP55 and transmembrane TGFA (By similarity).</text>
</comment>
<comment type="subcellular location">
    <subcellularLocation>
        <location>Endoplasmic reticulum membrane</location>
        <topology>Multi-pass membrane protein</topology>
    </subcellularLocation>
    <subcellularLocation>
        <location>Golgi apparatus membrane</location>
    </subcellularLocation>
    <text evidence="1">Located primarily in the ER; may cycle between the ER and the Golgi apparatus.</text>
</comment>
<comment type="similarity">
    <text evidence="3">Belongs to the cornichon family.</text>
</comment>
<feature type="chain" id="PRO_0000122221" description="Protein cornichon homolog 1">
    <location>
        <begin position="1"/>
        <end position="144"/>
    </location>
</feature>
<feature type="topological domain" description="Cytoplasmic" evidence="2">
    <location>
        <begin position="1"/>
        <end position="10"/>
    </location>
</feature>
<feature type="transmembrane region" description="Helical" evidence="2">
    <location>
        <begin position="11"/>
        <end position="31"/>
    </location>
</feature>
<feature type="topological domain" description="Lumenal" evidence="2">
    <location>
        <begin position="32"/>
        <end position="56"/>
    </location>
</feature>
<feature type="transmembrane region" description="Helical" evidence="2">
    <location>
        <begin position="57"/>
        <end position="77"/>
    </location>
</feature>
<feature type="topological domain" description="Cytoplasmic" evidence="2">
    <location>
        <begin position="78"/>
        <end position="122"/>
    </location>
</feature>
<feature type="transmembrane region" description="Helical" evidence="2">
    <location>
        <begin position="123"/>
        <end position="143"/>
    </location>
</feature>
<feature type="topological domain" description="Lumenal" evidence="2">
    <location>
        <position position="144"/>
    </location>
</feature>